<protein>
    <recommendedName>
        <fullName evidence="1">Photosystem II reaction center Psb28 protein</fullName>
    </recommendedName>
    <alternativeName>
        <fullName evidence="1">Photosystem II 13 kDa protein</fullName>
    </alternativeName>
    <alternativeName>
        <fullName evidence="1">Photosystem II reaction center W protein</fullName>
    </alternativeName>
</protein>
<feature type="chain" id="PRO_1000144631" description="Photosystem II reaction center Psb28 protein">
    <location>
        <begin position="1"/>
        <end position="112"/>
    </location>
</feature>
<organism>
    <name type="scientific">Microcystis aeruginosa (strain NIES-843 / IAM M-2473)</name>
    <dbReference type="NCBI Taxonomy" id="449447"/>
    <lineage>
        <taxon>Bacteria</taxon>
        <taxon>Bacillati</taxon>
        <taxon>Cyanobacteriota</taxon>
        <taxon>Cyanophyceae</taxon>
        <taxon>Oscillatoriophycideae</taxon>
        <taxon>Chroococcales</taxon>
        <taxon>Microcystaceae</taxon>
        <taxon>Microcystis</taxon>
    </lineage>
</organism>
<sequence>MAEIQFSKGLKEPVVPDIRLSRTKTGEKGSAEFYFKQPTILGDQQTEEITGMYLIDEEGEIVTTKVKGKFINGKPMAIEATVIFNSPAEWDRFMRFMERYGSENGLEFTKSS</sequence>
<reference key="1">
    <citation type="journal article" date="2007" name="DNA Res.">
        <title>Complete genomic structure of the bloom-forming toxic cyanobacterium Microcystis aeruginosa NIES-843.</title>
        <authorList>
            <person name="Kaneko T."/>
            <person name="Nakajima N."/>
            <person name="Okamoto S."/>
            <person name="Suzuki I."/>
            <person name="Tanabe Y."/>
            <person name="Tamaoki M."/>
            <person name="Nakamura Y."/>
            <person name="Kasai F."/>
            <person name="Watanabe A."/>
            <person name="Kawashima K."/>
            <person name="Kishida Y."/>
            <person name="Ono A."/>
            <person name="Shimizu Y."/>
            <person name="Takahashi C."/>
            <person name="Minami C."/>
            <person name="Fujishiro T."/>
            <person name="Kohara M."/>
            <person name="Katoh M."/>
            <person name="Nakazaki N."/>
            <person name="Nakayama S."/>
            <person name="Yamada M."/>
            <person name="Tabata S."/>
            <person name="Watanabe M.M."/>
        </authorList>
    </citation>
    <scope>NUCLEOTIDE SEQUENCE [LARGE SCALE GENOMIC DNA]</scope>
    <source>
        <strain>NIES-843 / IAM M-247</strain>
    </source>
</reference>
<gene>
    <name evidence="1" type="primary">psb28</name>
    <name type="ordered locus">MAE_54390</name>
</gene>
<keyword id="KW-0472">Membrane</keyword>
<keyword id="KW-0602">Photosynthesis</keyword>
<keyword id="KW-0604">Photosystem II</keyword>
<keyword id="KW-0793">Thylakoid</keyword>
<dbReference type="EMBL" id="AP009552">
    <property type="protein sequence ID" value="BAG05261.1"/>
    <property type="molecule type" value="Genomic_DNA"/>
</dbReference>
<dbReference type="RefSeq" id="WP_002796202.1">
    <property type="nucleotide sequence ID" value="NC_010296.1"/>
</dbReference>
<dbReference type="SMR" id="B0JGJ5"/>
<dbReference type="STRING" id="449447.MAE_54390"/>
<dbReference type="PaxDb" id="449447-MAE_54390"/>
<dbReference type="EnsemblBacteria" id="BAG05261">
    <property type="protein sequence ID" value="BAG05261"/>
    <property type="gene ID" value="MAE_54390"/>
</dbReference>
<dbReference type="KEGG" id="mar:MAE_54390"/>
<dbReference type="eggNOG" id="ENOG5031GDS">
    <property type="taxonomic scope" value="Bacteria"/>
</dbReference>
<dbReference type="HOGENOM" id="CLU_137323_1_0_3"/>
<dbReference type="BioCyc" id="MAER449447:MAE_RS23630-MONOMER"/>
<dbReference type="Proteomes" id="UP000001510">
    <property type="component" value="Chromosome"/>
</dbReference>
<dbReference type="GO" id="GO:0009654">
    <property type="term" value="C:photosystem II oxygen evolving complex"/>
    <property type="evidence" value="ECO:0007669"/>
    <property type="project" value="InterPro"/>
</dbReference>
<dbReference type="GO" id="GO:0031676">
    <property type="term" value="C:plasma membrane-derived thylakoid membrane"/>
    <property type="evidence" value="ECO:0007669"/>
    <property type="project" value="UniProtKB-SubCell"/>
</dbReference>
<dbReference type="GO" id="GO:0015979">
    <property type="term" value="P:photosynthesis"/>
    <property type="evidence" value="ECO:0007669"/>
    <property type="project" value="UniProtKB-UniRule"/>
</dbReference>
<dbReference type="Gene3D" id="2.40.30.220">
    <property type="entry name" value="Photosystem II Psb28"/>
    <property type="match status" value="1"/>
</dbReference>
<dbReference type="HAMAP" id="MF_01370">
    <property type="entry name" value="PSII_Psb28"/>
    <property type="match status" value="1"/>
</dbReference>
<dbReference type="InterPro" id="IPR038676">
    <property type="entry name" value="Psb28_c1_sf"/>
</dbReference>
<dbReference type="InterPro" id="IPR005610">
    <property type="entry name" value="PSII_Psb28_class-1"/>
</dbReference>
<dbReference type="NCBIfam" id="TIGR03047">
    <property type="entry name" value="PS_II_psb28"/>
    <property type="match status" value="1"/>
</dbReference>
<dbReference type="PANTHER" id="PTHR34963">
    <property type="match status" value="1"/>
</dbReference>
<dbReference type="PANTHER" id="PTHR34963:SF2">
    <property type="entry name" value="PHOTOSYSTEM II REACTION CENTER PSB28 PROTEIN, CHLOROPLASTIC"/>
    <property type="match status" value="1"/>
</dbReference>
<dbReference type="Pfam" id="PF03912">
    <property type="entry name" value="Psb28"/>
    <property type="match status" value="1"/>
</dbReference>
<proteinExistence type="inferred from homology"/>
<evidence type="ECO:0000255" key="1">
    <source>
        <dbReference type="HAMAP-Rule" id="MF_01370"/>
    </source>
</evidence>
<name>PSB28_MICAN</name>
<accession>B0JGJ5</accession>
<comment type="subunit">
    <text evidence="1">Part of the photosystem II complex.</text>
</comment>
<comment type="subcellular location">
    <subcellularLocation>
        <location evidence="1">Cellular thylakoid membrane</location>
        <topology evidence="1">Peripheral membrane protein</topology>
        <orientation evidence="1">Cytoplasmic side</orientation>
    </subcellularLocation>
</comment>
<comment type="similarity">
    <text evidence="1">Belongs to the Psb28 family.</text>
</comment>